<feature type="chain" id="PRO_1000192639" description="Ribosomal protein L11 methyltransferase">
    <location>
        <begin position="1"/>
        <end position="320"/>
    </location>
</feature>
<feature type="binding site" evidence="1">
    <location>
        <position position="165"/>
    </location>
    <ligand>
        <name>S-adenosyl-L-methionine</name>
        <dbReference type="ChEBI" id="CHEBI:59789"/>
    </ligand>
</feature>
<feature type="binding site" evidence="1">
    <location>
        <position position="186"/>
    </location>
    <ligand>
        <name>S-adenosyl-L-methionine</name>
        <dbReference type="ChEBI" id="CHEBI:59789"/>
    </ligand>
</feature>
<feature type="binding site" evidence="1">
    <location>
        <position position="208"/>
    </location>
    <ligand>
        <name>S-adenosyl-L-methionine</name>
        <dbReference type="ChEBI" id="CHEBI:59789"/>
    </ligand>
</feature>
<feature type="binding site" evidence="1">
    <location>
        <position position="251"/>
    </location>
    <ligand>
        <name>S-adenosyl-L-methionine</name>
        <dbReference type="ChEBI" id="CHEBI:59789"/>
    </ligand>
</feature>
<accession>B2GBW2</accession>
<organism>
    <name type="scientific">Limosilactobacillus fermentum (strain NBRC 3956 / LMG 18251)</name>
    <name type="common">Lactobacillus fermentum</name>
    <dbReference type="NCBI Taxonomy" id="334390"/>
    <lineage>
        <taxon>Bacteria</taxon>
        <taxon>Bacillati</taxon>
        <taxon>Bacillota</taxon>
        <taxon>Bacilli</taxon>
        <taxon>Lactobacillales</taxon>
        <taxon>Lactobacillaceae</taxon>
        <taxon>Limosilactobacillus</taxon>
    </lineage>
</organism>
<name>PRMA_LIMF3</name>
<gene>
    <name evidence="1" type="primary">prmA</name>
    <name type="ordered locus">LAF_0808</name>
</gene>
<reference key="1">
    <citation type="journal article" date="2008" name="DNA Res.">
        <title>Comparative genome analysis of Lactobacillus reuteri and Lactobacillus fermentum reveal a genomic island for reuterin and cobalamin production.</title>
        <authorList>
            <person name="Morita H."/>
            <person name="Toh H."/>
            <person name="Fukuda S."/>
            <person name="Horikawa H."/>
            <person name="Oshima K."/>
            <person name="Suzuki T."/>
            <person name="Murakami M."/>
            <person name="Hisamatsu S."/>
            <person name="Kato Y."/>
            <person name="Takizawa T."/>
            <person name="Fukuoka H."/>
            <person name="Yoshimura T."/>
            <person name="Itoh K."/>
            <person name="O'Sullivan D.J."/>
            <person name="McKay L.L."/>
            <person name="Ohno H."/>
            <person name="Kikuchi J."/>
            <person name="Masaoka T."/>
            <person name="Hattori M."/>
        </authorList>
    </citation>
    <scope>NUCLEOTIDE SEQUENCE [LARGE SCALE GENOMIC DNA]</scope>
    <source>
        <strain>NBRC 3956 / LMG 18251</strain>
    </source>
</reference>
<protein>
    <recommendedName>
        <fullName evidence="1">Ribosomal protein L11 methyltransferase</fullName>
        <shortName evidence="1">L11 Mtase</shortName>
        <ecNumber evidence="1">2.1.1.-</ecNumber>
    </recommendedName>
</protein>
<proteinExistence type="inferred from homology"/>
<dbReference type="EC" id="2.1.1.-" evidence="1"/>
<dbReference type="EMBL" id="AP008937">
    <property type="protein sequence ID" value="BAG27144.1"/>
    <property type="molecule type" value="Genomic_DNA"/>
</dbReference>
<dbReference type="RefSeq" id="WP_003681791.1">
    <property type="nucleotide sequence ID" value="NC_010610.1"/>
</dbReference>
<dbReference type="SMR" id="B2GBW2"/>
<dbReference type="GeneID" id="83714809"/>
<dbReference type="KEGG" id="lfe:LAF_0808"/>
<dbReference type="eggNOG" id="COG2264">
    <property type="taxonomic scope" value="Bacteria"/>
</dbReference>
<dbReference type="HOGENOM" id="CLU_049382_0_1_9"/>
<dbReference type="Proteomes" id="UP000001697">
    <property type="component" value="Chromosome"/>
</dbReference>
<dbReference type="GO" id="GO:0005737">
    <property type="term" value="C:cytoplasm"/>
    <property type="evidence" value="ECO:0007669"/>
    <property type="project" value="UniProtKB-SubCell"/>
</dbReference>
<dbReference type="GO" id="GO:0016279">
    <property type="term" value="F:protein-lysine N-methyltransferase activity"/>
    <property type="evidence" value="ECO:0007669"/>
    <property type="project" value="RHEA"/>
</dbReference>
<dbReference type="GO" id="GO:0032259">
    <property type="term" value="P:methylation"/>
    <property type="evidence" value="ECO:0007669"/>
    <property type="project" value="UniProtKB-KW"/>
</dbReference>
<dbReference type="CDD" id="cd02440">
    <property type="entry name" value="AdoMet_MTases"/>
    <property type="match status" value="1"/>
</dbReference>
<dbReference type="Gene3D" id="3.40.50.150">
    <property type="entry name" value="Vaccinia Virus protein VP39"/>
    <property type="match status" value="1"/>
</dbReference>
<dbReference type="HAMAP" id="MF_00735">
    <property type="entry name" value="Methyltr_PrmA"/>
    <property type="match status" value="1"/>
</dbReference>
<dbReference type="InterPro" id="IPR050078">
    <property type="entry name" value="Ribosomal_L11_MeTrfase_PrmA"/>
</dbReference>
<dbReference type="InterPro" id="IPR004498">
    <property type="entry name" value="Ribosomal_PrmA_MeTrfase"/>
</dbReference>
<dbReference type="InterPro" id="IPR029063">
    <property type="entry name" value="SAM-dependent_MTases_sf"/>
</dbReference>
<dbReference type="NCBIfam" id="TIGR00406">
    <property type="entry name" value="prmA"/>
    <property type="match status" value="1"/>
</dbReference>
<dbReference type="PANTHER" id="PTHR43648">
    <property type="entry name" value="ELECTRON TRANSFER FLAVOPROTEIN BETA SUBUNIT LYSINE METHYLTRANSFERASE"/>
    <property type="match status" value="1"/>
</dbReference>
<dbReference type="PANTHER" id="PTHR43648:SF1">
    <property type="entry name" value="ELECTRON TRANSFER FLAVOPROTEIN BETA SUBUNIT LYSINE METHYLTRANSFERASE"/>
    <property type="match status" value="1"/>
</dbReference>
<dbReference type="Pfam" id="PF06325">
    <property type="entry name" value="PrmA"/>
    <property type="match status" value="1"/>
</dbReference>
<dbReference type="PIRSF" id="PIRSF000401">
    <property type="entry name" value="RPL11_MTase"/>
    <property type="match status" value="1"/>
</dbReference>
<dbReference type="SUPFAM" id="SSF53335">
    <property type="entry name" value="S-adenosyl-L-methionine-dependent methyltransferases"/>
    <property type="match status" value="1"/>
</dbReference>
<keyword id="KW-0963">Cytoplasm</keyword>
<keyword id="KW-0489">Methyltransferase</keyword>
<keyword id="KW-1185">Reference proteome</keyword>
<keyword id="KW-0949">S-adenosyl-L-methionine</keyword>
<keyword id="KW-0808">Transferase</keyword>
<comment type="function">
    <text evidence="1">Methylates ribosomal protein L11.</text>
</comment>
<comment type="catalytic activity">
    <reaction evidence="1">
        <text>L-lysyl-[protein] + 3 S-adenosyl-L-methionine = N(6),N(6),N(6)-trimethyl-L-lysyl-[protein] + 3 S-adenosyl-L-homocysteine + 3 H(+)</text>
        <dbReference type="Rhea" id="RHEA:54192"/>
        <dbReference type="Rhea" id="RHEA-COMP:9752"/>
        <dbReference type="Rhea" id="RHEA-COMP:13826"/>
        <dbReference type="ChEBI" id="CHEBI:15378"/>
        <dbReference type="ChEBI" id="CHEBI:29969"/>
        <dbReference type="ChEBI" id="CHEBI:57856"/>
        <dbReference type="ChEBI" id="CHEBI:59789"/>
        <dbReference type="ChEBI" id="CHEBI:61961"/>
    </reaction>
</comment>
<comment type="subcellular location">
    <subcellularLocation>
        <location evidence="1">Cytoplasm</location>
    </subcellularLocation>
</comment>
<comment type="similarity">
    <text evidence="1">Belongs to the methyltransferase superfamily. PrmA family.</text>
</comment>
<evidence type="ECO:0000255" key="1">
    <source>
        <dbReference type="HAMAP-Rule" id="MF_00735"/>
    </source>
</evidence>
<sequence>MNWTAIVVETSTEAVDAVSYILTDTGATGVKIDDAADYQKLKPGKYGPYGEIVDPSTLPHREEGAAVTGYYPPTTFVPEKIADIRQRVAKLADFGLNPAPARVAAEEIDNQDWATAWQKYYHPVRVTRELTIVPQWEEYTPATADEKLLVLDPGMAFGTGTHPTTQLMLQALTIALRGGESMIDVGTGSGVLSIAAKQLGAGEVWAYDIDDVAVKSAKKNLALNPIAKDVHTGVNSLLDGIHTQVDLVVANILAEIILPLVPQAFENLKPGGKFLTSGIINTKFETVKKAIEAQGFVVDETMRIKDWYGIIAHKPAPEEA</sequence>